<sequence>MTKKNWNINLKEMVKVGVHFGHETRKWNPKMAPYIFKERKDNHILNLTYTARFLSEACDFVFDGAKRGKQFMIVGTKHQTADAAKLAALAARCHYVNKKWLAGMLTNWFTTEARLEKFKNLTKKKNTGGFDGFTKKEAAILKRELNKLQEDLGGIRYMTKLPDIVIILDQKGEYTAIRECRTLGIPTICLVDTDCDPDLVDIPIPANDDGRGPIRLILNKLILAIRAGRELYYKK</sequence>
<keyword id="KW-0150">Chloroplast</keyword>
<keyword id="KW-0934">Plastid</keyword>
<keyword id="KW-0687">Ribonucleoprotein</keyword>
<keyword id="KW-0689">Ribosomal protein</keyword>
<protein>
    <recommendedName>
        <fullName evidence="1">Small ribosomal subunit protein uS2c</fullName>
    </recommendedName>
    <alternativeName>
        <fullName>30S ribosomal protein S2, chloroplastic</fullName>
    </alternativeName>
</protein>
<gene>
    <name type="primary">rps2</name>
</gene>
<reference key="1">
    <citation type="journal article" date="2008" name="BMC Plant Biol.">
        <title>Complete nucleotide sequence of the Cryptomeria japonica D. Don. chloroplast genome and comparative chloroplast genomics: diversified genomic structure of coniferous species.</title>
        <authorList>
            <person name="Hirao T."/>
            <person name="Watanabe A."/>
            <person name="Kurita M."/>
            <person name="Kondo T."/>
            <person name="Takata K."/>
        </authorList>
    </citation>
    <scope>NUCLEOTIDE SEQUENCE [LARGE SCALE GENOMIC DNA]</scope>
</reference>
<organism>
    <name type="scientific">Cryptomeria japonica</name>
    <name type="common">Japanese cedar</name>
    <name type="synonym">Cupressus japonica</name>
    <dbReference type="NCBI Taxonomy" id="3369"/>
    <lineage>
        <taxon>Eukaryota</taxon>
        <taxon>Viridiplantae</taxon>
        <taxon>Streptophyta</taxon>
        <taxon>Embryophyta</taxon>
        <taxon>Tracheophyta</taxon>
        <taxon>Spermatophyta</taxon>
        <taxon>Pinopsida</taxon>
        <taxon>Pinidae</taxon>
        <taxon>Conifers II</taxon>
        <taxon>Cupressales</taxon>
        <taxon>Cupressaceae</taxon>
        <taxon>Cryptomeria</taxon>
    </lineage>
</organism>
<feature type="chain" id="PRO_0000352105" description="Small ribosomal subunit protein uS2c">
    <location>
        <begin position="1"/>
        <end position="235"/>
    </location>
</feature>
<accession>B1VKH6</accession>
<geneLocation type="chloroplast"/>
<evidence type="ECO:0000305" key="1"/>
<proteinExistence type="inferred from homology"/>
<comment type="subcellular location">
    <subcellularLocation>
        <location>Plastid</location>
        <location>Chloroplast</location>
    </subcellularLocation>
</comment>
<comment type="similarity">
    <text evidence="1">Belongs to the universal ribosomal protein uS2 family.</text>
</comment>
<dbReference type="EMBL" id="AP009377">
    <property type="protein sequence ID" value="BAG16687.1"/>
    <property type="molecule type" value="Genomic_DNA"/>
</dbReference>
<dbReference type="RefSeq" id="YP_001806689.1">
    <property type="nucleotide sequence ID" value="NC_010548.1"/>
</dbReference>
<dbReference type="SMR" id="B1VKH6"/>
<dbReference type="GeneID" id="6166644"/>
<dbReference type="KEGG" id="cjf:6166644"/>
<dbReference type="OrthoDB" id="565471at2759"/>
<dbReference type="GO" id="GO:0009507">
    <property type="term" value="C:chloroplast"/>
    <property type="evidence" value="ECO:0007669"/>
    <property type="project" value="UniProtKB-SubCell"/>
</dbReference>
<dbReference type="GO" id="GO:0005763">
    <property type="term" value="C:mitochondrial small ribosomal subunit"/>
    <property type="evidence" value="ECO:0007669"/>
    <property type="project" value="TreeGrafter"/>
</dbReference>
<dbReference type="GO" id="GO:0003735">
    <property type="term" value="F:structural constituent of ribosome"/>
    <property type="evidence" value="ECO:0007669"/>
    <property type="project" value="InterPro"/>
</dbReference>
<dbReference type="GO" id="GO:0006412">
    <property type="term" value="P:translation"/>
    <property type="evidence" value="ECO:0007669"/>
    <property type="project" value="UniProtKB-UniRule"/>
</dbReference>
<dbReference type="CDD" id="cd01425">
    <property type="entry name" value="RPS2"/>
    <property type="match status" value="1"/>
</dbReference>
<dbReference type="FunFam" id="1.10.287.610:FF:000001">
    <property type="entry name" value="30S ribosomal protein S2"/>
    <property type="match status" value="1"/>
</dbReference>
<dbReference type="Gene3D" id="3.40.50.10490">
    <property type="entry name" value="Glucose-6-phosphate isomerase like protein, domain 1"/>
    <property type="match status" value="1"/>
</dbReference>
<dbReference type="Gene3D" id="1.10.287.610">
    <property type="entry name" value="Helix hairpin bin"/>
    <property type="match status" value="1"/>
</dbReference>
<dbReference type="HAMAP" id="MF_00291_B">
    <property type="entry name" value="Ribosomal_uS2_B"/>
    <property type="match status" value="1"/>
</dbReference>
<dbReference type="InterPro" id="IPR001865">
    <property type="entry name" value="Ribosomal_uS2"/>
</dbReference>
<dbReference type="InterPro" id="IPR005706">
    <property type="entry name" value="Ribosomal_uS2_bac/mit/plastid"/>
</dbReference>
<dbReference type="InterPro" id="IPR018130">
    <property type="entry name" value="Ribosomal_uS2_CS"/>
</dbReference>
<dbReference type="InterPro" id="IPR023591">
    <property type="entry name" value="Ribosomal_uS2_flav_dom_sf"/>
</dbReference>
<dbReference type="NCBIfam" id="TIGR01011">
    <property type="entry name" value="rpsB_bact"/>
    <property type="match status" value="1"/>
</dbReference>
<dbReference type="PANTHER" id="PTHR12534">
    <property type="entry name" value="30S RIBOSOMAL PROTEIN S2 PROKARYOTIC AND ORGANELLAR"/>
    <property type="match status" value="1"/>
</dbReference>
<dbReference type="PANTHER" id="PTHR12534:SF0">
    <property type="entry name" value="SMALL RIBOSOMAL SUBUNIT PROTEIN US2M"/>
    <property type="match status" value="1"/>
</dbReference>
<dbReference type="Pfam" id="PF00318">
    <property type="entry name" value="Ribosomal_S2"/>
    <property type="match status" value="1"/>
</dbReference>
<dbReference type="PRINTS" id="PR00395">
    <property type="entry name" value="RIBOSOMALS2"/>
</dbReference>
<dbReference type="SUPFAM" id="SSF52313">
    <property type="entry name" value="Ribosomal protein S2"/>
    <property type="match status" value="1"/>
</dbReference>
<dbReference type="PROSITE" id="PS00963">
    <property type="entry name" value="RIBOSOMAL_S2_2"/>
    <property type="match status" value="1"/>
</dbReference>
<name>RR2_CRYJA</name>